<organism>
    <name type="scientific">Candida albicans (strain SC5314 / ATCC MYA-2876)</name>
    <name type="common">Yeast</name>
    <dbReference type="NCBI Taxonomy" id="237561"/>
    <lineage>
        <taxon>Eukaryota</taxon>
        <taxon>Fungi</taxon>
        <taxon>Dikarya</taxon>
        <taxon>Ascomycota</taxon>
        <taxon>Saccharomycotina</taxon>
        <taxon>Pichiomycetes</taxon>
        <taxon>Debaryomycetaceae</taxon>
        <taxon>Candida/Lodderomyces clade</taxon>
        <taxon>Candida</taxon>
    </lineage>
</organism>
<sequence>MPHHIMSINDSNHVQIGGRKSKLAVVQSEIVKKVIEDTFPNLSCSILALSTLGDKVQTQPLYTFGGKSLWTKELEILLLDSVDEFPKLDLIVHSLKDMPTNLPEEFELGCIFQREDPRDAIVMKQGSSYKSLKDLPAGAIVGTSSIRRSSQLIKNYPHLRFESVRGNIQTRLNKLDQPNNEYCCLILASAGLIRLGLGHRITSYLDDMYYAVGQGALGIEIRKGDDNIKSILKKIEDPIATICCLAERSLMRYLEGGCSVPLGVHSDYNESKQELTLKGIIVSPDGTVSIEDEVIKRITCDEDCEQVGIELGDKLKAKGAKEILDKIDMTRNINARPTEV</sequence>
<evidence type="ECO:0000250" key="1"/>
<evidence type="ECO:0000305" key="2"/>
<keyword id="KW-0350">Heme biosynthesis</keyword>
<keyword id="KW-0627">Porphyrin biosynthesis</keyword>
<keyword id="KW-1185">Reference proteome</keyword>
<keyword id="KW-0808">Transferase</keyword>
<proteinExistence type="inferred from homology"/>
<gene>
    <name type="primary">HEM3</name>
    <name type="ordered locus">CAALFM_C210360CA</name>
    <name type="ORF">Ca38F10.02</name>
    <name type="ORF">CaO19.1742</name>
    <name type="ORF">CaO19.9309</name>
</gene>
<dbReference type="EC" id="2.5.1.61"/>
<dbReference type="EMBL" id="AL033502">
    <property type="protein sequence ID" value="CAA21999.1"/>
    <property type="molecule type" value="Genomic_DNA"/>
</dbReference>
<dbReference type="EMBL" id="CP017624">
    <property type="protein sequence ID" value="AOW28013.1"/>
    <property type="molecule type" value="Genomic_DNA"/>
</dbReference>
<dbReference type="RefSeq" id="XP_714388.1">
    <property type="nucleotide sequence ID" value="XM_709295.2"/>
</dbReference>
<dbReference type="SMR" id="O94048"/>
<dbReference type="FunCoup" id="O94048">
    <property type="interactions" value="688"/>
</dbReference>
<dbReference type="STRING" id="237561.O94048"/>
<dbReference type="EnsemblFungi" id="C2_10360C_A-T">
    <property type="protein sequence ID" value="C2_10360C_A-T-p1"/>
    <property type="gene ID" value="C2_10360C_A"/>
</dbReference>
<dbReference type="GeneID" id="3643940"/>
<dbReference type="KEGG" id="cal:CAALFM_C210360CA"/>
<dbReference type="CGD" id="CAL0000176208">
    <property type="gene designation" value="HEM3"/>
</dbReference>
<dbReference type="VEuPathDB" id="FungiDB:C2_10360C_A"/>
<dbReference type="eggNOG" id="KOG2892">
    <property type="taxonomic scope" value="Eukaryota"/>
</dbReference>
<dbReference type="HOGENOM" id="CLU_019704_0_2_1"/>
<dbReference type="InParanoid" id="O94048"/>
<dbReference type="OMA" id="LWQANHI"/>
<dbReference type="OrthoDB" id="564646at2759"/>
<dbReference type="UniPathway" id="UPA00251">
    <property type="reaction ID" value="UER00319"/>
</dbReference>
<dbReference type="PRO" id="PR:O94048"/>
<dbReference type="Proteomes" id="UP000000559">
    <property type="component" value="Chromosome 2"/>
</dbReference>
<dbReference type="GO" id="GO:0005737">
    <property type="term" value="C:cytoplasm"/>
    <property type="evidence" value="ECO:0000318"/>
    <property type="project" value="GO_Central"/>
</dbReference>
<dbReference type="GO" id="GO:0004418">
    <property type="term" value="F:hydroxymethylbilane synthase activity"/>
    <property type="evidence" value="ECO:0000315"/>
    <property type="project" value="CGD"/>
</dbReference>
<dbReference type="GO" id="GO:0006783">
    <property type="term" value="P:heme biosynthetic process"/>
    <property type="evidence" value="ECO:0000315"/>
    <property type="project" value="CGD"/>
</dbReference>
<dbReference type="GO" id="GO:0006782">
    <property type="term" value="P:protoporphyrinogen IX biosynthetic process"/>
    <property type="evidence" value="ECO:0007669"/>
    <property type="project" value="UniProtKB-UniPathway"/>
</dbReference>
<dbReference type="CDD" id="cd13645">
    <property type="entry name" value="PBP2_HuPBGD_like"/>
    <property type="match status" value="1"/>
</dbReference>
<dbReference type="FunFam" id="3.30.160.40:FF:000002">
    <property type="entry name" value="Porphobilinogen deaminase"/>
    <property type="match status" value="1"/>
</dbReference>
<dbReference type="FunFam" id="3.40.190.10:FF:000005">
    <property type="entry name" value="Porphobilinogen deaminase"/>
    <property type="match status" value="1"/>
</dbReference>
<dbReference type="Gene3D" id="3.40.190.10">
    <property type="entry name" value="Periplasmic binding protein-like II"/>
    <property type="match status" value="2"/>
</dbReference>
<dbReference type="Gene3D" id="3.30.160.40">
    <property type="entry name" value="Porphobilinogen deaminase, C-terminal domain"/>
    <property type="match status" value="1"/>
</dbReference>
<dbReference type="InterPro" id="IPR000860">
    <property type="entry name" value="HemC"/>
</dbReference>
<dbReference type="InterPro" id="IPR022419">
    <property type="entry name" value="Porphobilin_deaminase_cofac_BS"/>
</dbReference>
<dbReference type="InterPro" id="IPR022417">
    <property type="entry name" value="Porphobilin_deaminase_N"/>
</dbReference>
<dbReference type="InterPro" id="IPR022418">
    <property type="entry name" value="Porphobilinogen_deaminase_C"/>
</dbReference>
<dbReference type="InterPro" id="IPR036803">
    <property type="entry name" value="Porphobilinogen_deaminase_C_sf"/>
</dbReference>
<dbReference type="NCBIfam" id="TIGR00212">
    <property type="entry name" value="hemC"/>
    <property type="match status" value="1"/>
</dbReference>
<dbReference type="PANTHER" id="PTHR11557">
    <property type="entry name" value="PORPHOBILINOGEN DEAMINASE"/>
    <property type="match status" value="1"/>
</dbReference>
<dbReference type="PANTHER" id="PTHR11557:SF0">
    <property type="entry name" value="PORPHOBILINOGEN DEAMINASE"/>
    <property type="match status" value="1"/>
</dbReference>
<dbReference type="Pfam" id="PF01379">
    <property type="entry name" value="Porphobil_deam"/>
    <property type="match status" value="1"/>
</dbReference>
<dbReference type="Pfam" id="PF03900">
    <property type="entry name" value="Porphobil_deamC"/>
    <property type="match status" value="1"/>
</dbReference>
<dbReference type="PIRSF" id="PIRSF001438">
    <property type="entry name" value="4pyrrol_synth_OHMeBilane_synth"/>
    <property type="match status" value="1"/>
</dbReference>
<dbReference type="PRINTS" id="PR00151">
    <property type="entry name" value="PORPHBDMNASE"/>
</dbReference>
<dbReference type="SUPFAM" id="SSF53850">
    <property type="entry name" value="Periplasmic binding protein-like II"/>
    <property type="match status" value="1"/>
</dbReference>
<dbReference type="SUPFAM" id="SSF54782">
    <property type="entry name" value="Porphobilinogen deaminase (hydroxymethylbilane synthase), C-terminal domain"/>
    <property type="match status" value="1"/>
</dbReference>
<dbReference type="PROSITE" id="PS00533">
    <property type="entry name" value="PORPHOBILINOGEN_DEAM"/>
    <property type="match status" value="1"/>
</dbReference>
<protein>
    <recommendedName>
        <fullName>Porphobilinogen deaminase</fullName>
        <shortName>PBG</shortName>
        <ecNumber>2.5.1.61</ecNumber>
    </recommendedName>
    <alternativeName>
        <fullName>Hydroxymethylbilane synthase</fullName>
        <shortName>HMBS</shortName>
    </alternativeName>
    <alternativeName>
        <fullName>Pre-uroporphyrinogen synthase</fullName>
    </alternativeName>
</protein>
<name>HEM3_CANAL</name>
<accession>O94048</accession>
<accession>A0A1D8PIN5</accession>
<accession>Q59XW5</accession>
<reference key="1">
    <citation type="submission" date="1998-11" db="EMBL/GenBank/DDBJ databases">
        <title>Candida albicans strain 1161 genome pilot sequencing project.</title>
        <authorList>
            <person name="Oliver K."/>
            <person name="Harris D."/>
            <person name="Barrell B.G."/>
            <person name="Rajandream M.A."/>
        </authorList>
    </citation>
    <scope>NUCLEOTIDE SEQUENCE [LARGE SCALE GENOMIC DNA]</scope>
    <source>
        <strain>1161</strain>
    </source>
</reference>
<reference key="2">
    <citation type="journal article" date="2004" name="Proc. Natl. Acad. Sci. U.S.A.">
        <title>The diploid genome sequence of Candida albicans.</title>
        <authorList>
            <person name="Jones T."/>
            <person name="Federspiel N.A."/>
            <person name="Chibana H."/>
            <person name="Dungan J."/>
            <person name="Kalman S."/>
            <person name="Magee B.B."/>
            <person name="Newport G."/>
            <person name="Thorstenson Y.R."/>
            <person name="Agabian N."/>
            <person name="Magee P.T."/>
            <person name="Davis R.W."/>
            <person name="Scherer S."/>
        </authorList>
    </citation>
    <scope>NUCLEOTIDE SEQUENCE [LARGE SCALE GENOMIC DNA]</scope>
    <source>
        <strain>SC5314 / ATCC MYA-2876</strain>
    </source>
</reference>
<reference key="3">
    <citation type="journal article" date="2007" name="Genome Biol.">
        <title>Assembly of the Candida albicans genome into sixteen supercontigs aligned on the eight chromosomes.</title>
        <authorList>
            <person name="van het Hoog M."/>
            <person name="Rast T.J."/>
            <person name="Martchenko M."/>
            <person name="Grindle S."/>
            <person name="Dignard D."/>
            <person name="Hogues H."/>
            <person name="Cuomo C."/>
            <person name="Berriman M."/>
            <person name="Scherer S."/>
            <person name="Magee B.B."/>
            <person name="Whiteway M."/>
            <person name="Chibana H."/>
            <person name="Nantel A."/>
            <person name="Magee P.T."/>
        </authorList>
    </citation>
    <scope>GENOME REANNOTATION</scope>
    <source>
        <strain>SC5314 / ATCC MYA-2876</strain>
    </source>
</reference>
<reference key="4">
    <citation type="journal article" date="2013" name="Genome Biol.">
        <title>Assembly of a phased diploid Candida albicans genome facilitates allele-specific measurements and provides a simple model for repeat and indel structure.</title>
        <authorList>
            <person name="Muzzey D."/>
            <person name="Schwartz K."/>
            <person name="Weissman J.S."/>
            <person name="Sherlock G."/>
        </authorList>
    </citation>
    <scope>NUCLEOTIDE SEQUENCE [LARGE SCALE GENOMIC DNA]</scope>
    <scope>GENOME REANNOTATION</scope>
    <source>
        <strain>SC5314 / ATCC MYA-2876</strain>
    </source>
</reference>
<feature type="chain" id="PRO_0000143038" description="Porphobilinogen deaminase">
    <location>
        <begin position="1"/>
        <end position="340"/>
    </location>
</feature>
<feature type="modified residue" description="S-(dipyrrolylmethanemethyl)cysteine" evidence="1">
    <location>
        <position position="258"/>
    </location>
</feature>
<comment type="function">
    <text evidence="1">Tetrapolymerization of the monopyrrole PBG into the hydroxymethylbilane pre-uroporphyrinogen in several discrete steps.</text>
</comment>
<comment type="catalytic activity">
    <reaction>
        <text>4 porphobilinogen + H2O = hydroxymethylbilane + 4 NH4(+)</text>
        <dbReference type="Rhea" id="RHEA:13185"/>
        <dbReference type="ChEBI" id="CHEBI:15377"/>
        <dbReference type="ChEBI" id="CHEBI:28938"/>
        <dbReference type="ChEBI" id="CHEBI:57845"/>
        <dbReference type="ChEBI" id="CHEBI:58126"/>
        <dbReference type="EC" id="2.5.1.61"/>
    </reaction>
</comment>
<comment type="cofactor">
    <cofactor evidence="1">
        <name>dipyrromethane</name>
        <dbReference type="ChEBI" id="CHEBI:60342"/>
    </cofactor>
    <text evidence="1">Binds 1 dipyrromethane group covalently.</text>
</comment>
<comment type="pathway">
    <text>Porphyrin-containing compound metabolism; protoporphyrin-IX biosynthesis; coproporphyrinogen-III from 5-aminolevulinate: step 2/4.</text>
</comment>
<comment type="miscellaneous">
    <text>The porphobilinogen subunits are added to the dipyrromethan group.</text>
</comment>
<comment type="similarity">
    <text evidence="2">Belongs to the HMBS family.</text>
</comment>